<sequence length="511" mass="55930">MKTALLSVSDKTGIVEFARGLVKADFRIISTGGTKKVLEEAGLSIVSVEAITNFPEMLDGRVKTLHPAIHGGLLARRDLPEHLAALKEHNIDLIDLVCVNLYPFKSTIMQNGVTEAEAIEQIDIGGPSMLRSAAKNFASVLPVVDPKDYQPVLAALAHQTDNVKFRRALALKVFQHTAAYDTLIAQYLGQNGEIFPDELTKTYTKKQVMRYGENSHQKAAFYEDALPVPFSIAQAQQLHGKELSYNNIKDADAALKMSAEFNQPAVVAVKHMNPCGIGLGQNIEEAWDRAYEADSMSIFGGIIVLNRPVDLATAEKMHKLFLEIIIAPSFEKEAFTVLAQKKNLRIMTVDFNQHQDAKELETVSVMGGLLVQEQDAVVETATDFKVVSKRQPTESELKAMVFGQTVVKHVKSNAIVITTDQQTLGIGAGQMNRIGSVEIAVKQAEGSANFKNAVMASDAFFPMEDCVEYAAKHGIKAIVEPGGSIKDQASIDKADELGISLIFSGRRHFRH</sequence>
<keyword id="KW-0378">Hydrolase</keyword>
<keyword id="KW-0511">Multifunctional enzyme</keyword>
<keyword id="KW-0658">Purine biosynthesis</keyword>
<keyword id="KW-0808">Transferase</keyword>
<protein>
    <recommendedName>
        <fullName evidence="1">Bifunctional purine biosynthesis protein PurH</fullName>
    </recommendedName>
    <domain>
        <recommendedName>
            <fullName evidence="1">Phosphoribosylaminoimidazolecarboxamide formyltransferase</fullName>
            <ecNumber evidence="1">2.1.2.3</ecNumber>
        </recommendedName>
        <alternativeName>
            <fullName evidence="1">AICAR transformylase</fullName>
        </alternativeName>
    </domain>
    <domain>
        <recommendedName>
            <fullName evidence="1">IMP cyclohydrolase</fullName>
            <ecNumber evidence="1">3.5.4.10</ecNumber>
        </recommendedName>
        <alternativeName>
            <fullName evidence="1">ATIC</fullName>
        </alternativeName>
        <alternativeName>
            <fullName evidence="1">IMP synthase</fullName>
        </alternativeName>
        <alternativeName>
            <fullName evidence="1">Inosinicase</fullName>
        </alternativeName>
    </domain>
</protein>
<proteinExistence type="inferred from homology"/>
<comment type="catalytic activity">
    <reaction evidence="1">
        <text>(6R)-10-formyltetrahydrofolate + 5-amino-1-(5-phospho-beta-D-ribosyl)imidazole-4-carboxamide = 5-formamido-1-(5-phospho-D-ribosyl)imidazole-4-carboxamide + (6S)-5,6,7,8-tetrahydrofolate</text>
        <dbReference type="Rhea" id="RHEA:22192"/>
        <dbReference type="ChEBI" id="CHEBI:57453"/>
        <dbReference type="ChEBI" id="CHEBI:58467"/>
        <dbReference type="ChEBI" id="CHEBI:58475"/>
        <dbReference type="ChEBI" id="CHEBI:195366"/>
        <dbReference type="EC" id="2.1.2.3"/>
    </reaction>
</comment>
<comment type="catalytic activity">
    <reaction evidence="1">
        <text>IMP + H2O = 5-formamido-1-(5-phospho-D-ribosyl)imidazole-4-carboxamide</text>
        <dbReference type="Rhea" id="RHEA:18445"/>
        <dbReference type="ChEBI" id="CHEBI:15377"/>
        <dbReference type="ChEBI" id="CHEBI:58053"/>
        <dbReference type="ChEBI" id="CHEBI:58467"/>
        <dbReference type="EC" id="3.5.4.10"/>
    </reaction>
</comment>
<comment type="pathway">
    <text evidence="1">Purine metabolism; IMP biosynthesis via de novo pathway; 5-formamido-1-(5-phospho-D-ribosyl)imidazole-4-carboxamide from 5-amino-1-(5-phospho-D-ribosyl)imidazole-4-carboxamide (10-formyl THF route): step 1/1.</text>
</comment>
<comment type="pathway">
    <text evidence="1">Purine metabolism; IMP biosynthesis via de novo pathway; IMP from 5-formamido-1-(5-phospho-D-ribosyl)imidazole-4-carboxamide: step 1/1.</text>
</comment>
<comment type="domain">
    <text evidence="1">The IMP cyclohydrolase activity resides in the N-terminal region.</text>
</comment>
<comment type="similarity">
    <text evidence="1">Belongs to the PurH family.</text>
</comment>
<feature type="chain" id="PRO_1000018922" description="Bifunctional purine biosynthesis protein PurH">
    <location>
        <begin position="1"/>
        <end position="511"/>
    </location>
</feature>
<feature type="domain" description="MGS-like" evidence="2">
    <location>
        <begin position="1"/>
        <end position="144"/>
    </location>
</feature>
<dbReference type="EC" id="2.1.2.3" evidence="1"/>
<dbReference type="EC" id="3.5.4.10" evidence="1"/>
<dbReference type="EMBL" id="CP000422">
    <property type="protein sequence ID" value="ABJ68489.1"/>
    <property type="molecule type" value="Genomic_DNA"/>
</dbReference>
<dbReference type="RefSeq" id="WP_011673675.1">
    <property type="nucleotide sequence ID" value="NC_008525.1"/>
</dbReference>
<dbReference type="SMR" id="Q03E83"/>
<dbReference type="STRING" id="278197.PEPE_1458"/>
<dbReference type="GeneID" id="33062466"/>
<dbReference type="KEGG" id="ppe:PEPE_1458"/>
<dbReference type="eggNOG" id="COG0138">
    <property type="taxonomic scope" value="Bacteria"/>
</dbReference>
<dbReference type="HOGENOM" id="CLU_016316_5_2_9"/>
<dbReference type="OrthoDB" id="9802065at2"/>
<dbReference type="UniPathway" id="UPA00074">
    <property type="reaction ID" value="UER00133"/>
</dbReference>
<dbReference type="UniPathway" id="UPA00074">
    <property type="reaction ID" value="UER00135"/>
</dbReference>
<dbReference type="Proteomes" id="UP000000773">
    <property type="component" value="Chromosome"/>
</dbReference>
<dbReference type="GO" id="GO:0005829">
    <property type="term" value="C:cytosol"/>
    <property type="evidence" value="ECO:0007669"/>
    <property type="project" value="TreeGrafter"/>
</dbReference>
<dbReference type="GO" id="GO:0003937">
    <property type="term" value="F:IMP cyclohydrolase activity"/>
    <property type="evidence" value="ECO:0007669"/>
    <property type="project" value="UniProtKB-UniRule"/>
</dbReference>
<dbReference type="GO" id="GO:0004643">
    <property type="term" value="F:phosphoribosylaminoimidazolecarboxamide formyltransferase activity"/>
    <property type="evidence" value="ECO:0007669"/>
    <property type="project" value="UniProtKB-UniRule"/>
</dbReference>
<dbReference type="GO" id="GO:0006189">
    <property type="term" value="P:'de novo' IMP biosynthetic process"/>
    <property type="evidence" value="ECO:0007669"/>
    <property type="project" value="UniProtKB-UniRule"/>
</dbReference>
<dbReference type="CDD" id="cd01421">
    <property type="entry name" value="IMPCH"/>
    <property type="match status" value="1"/>
</dbReference>
<dbReference type="FunFam" id="3.40.140.20:FF:000001">
    <property type="entry name" value="Bifunctional purine biosynthesis protein PurH"/>
    <property type="match status" value="1"/>
</dbReference>
<dbReference type="FunFam" id="3.40.140.20:FF:000002">
    <property type="entry name" value="Bifunctional purine biosynthesis protein PurH"/>
    <property type="match status" value="1"/>
</dbReference>
<dbReference type="FunFam" id="3.40.50.1380:FF:000001">
    <property type="entry name" value="Bifunctional purine biosynthesis protein PurH"/>
    <property type="match status" value="1"/>
</dbReference>
<dbReference type="Gene3D" id="3.40.140.20">
    <property type="match status" value="2"/>
</dbReference>
<dbReference type="Gene3D" id="3.40.50.1380">
    <property type="entry name" value="Methylglyoxal synthase-like domain"/>
    <property type="match status" value="1"/>
</dbReference>
<dbReference type="HAMAP" id="MF_00139">
    <property type="entry name" value="PurH"/>
    <property type="match status" value="1"/>
</dbReference>
<dbReference type="InterPro" id="IPR024051">
    <property type="entry name" value="AICAR_Tfase_dup_dom_sf"/>
</dbReference>
<dbReference type="InterPro" id="IPR016193">
    <property type="entry name" value="Cytidine_deaminase-like"/>
</dbReference>
<dbReference type="InterPro" id="IPR011607">
    <property type="entry name" value="MGS-like_dom"/>
</dbReference>
<dbReference type="InterPro" id="IPR036914">
    <property type="entry name" value="MGS-like_dom_sf"/>
</dbReference>
<dbReference type="InterPro" id="IPR002695">
    <property type="entry name" value="PurH-like"/>
</dbReference>
<dbReference type="NCBIfam" id="NF002049">
    <property type="entry name" value="PRK00881.1"/>
    <property type="match status" value="1"/>
</dbReference>
<dbReference type="NCBIfam" id="TIGR00355">
    <property type="entry name" value="purH"/>
    <property type="match status" value="1"/>
</dbReference>
<dbReference type="PANTHER" id="PTHR11692:SF0">
    <property type="entry name" value="BIFUNCTIONAL PURINE BIOSYNTHESIS PROTEIN ATIC"/>
    <property type="match status" value="1"/>
</dbReference>
<dbReference type="PANTHER" id="PTHR11692">
    <property type="entry name" value="BIFUNCTIONAL PURINE BIOSYNTHESIS PROTEIN PURH"/>
    <property type="match status" value="1"/>
</dbReference>
<dbReference type="Pfam" id="PF01808">
    <property type="entry name" value="AICARFT_IMPCHas"/>
    <property type="match status" value="1"/>
</dbReference>
<dbReference type="Pfam" id="PF02142">
    <property type="entry name" value="MGS"/>
    <property type="match status" value="1"/>
</dbReference>
<dbReference type="PIRSF" id="PIRSF000414">
    <property type="entry name" value="AICARFT_IMPCHas"/>
    <property type="match status" value="1"/>
</dbReference>
<dbReference type="SMART" id="SM00798">
    <property type="entry name" value="AICARFT_IMPCHas"/>
    <property type="match status" value="1"/>
</dbReference>
<dbReference type="SMART" id="SM00851">
    <property type="entry name" value="MGS"/>
    <property type="match status" value="1"/>
</dbReference>
<dbReference type="SUPFAM" id="SSF53927">
    <property type="entry name" value="Cytidine deaminase-like"/>
    <property type="match status" value="1"/>
</dbReference>
<dbReference type="SUPFAM" id="SSF52335">
    <property type="entry name" value="Methylglyoxal synthase-like"/>
    <property type="match status" value="1"/>
</dbReference>
<dbReference type="PROSITE" id="PS51855">
    <property type="entry name" value="MGS"/>
    <property type="match status" value="1"/>
</dbReference>
<reference key="1">
    <citation type="journal article" date="2006" name="Proc. Natl. Acad. Sci. U.S.A.">
        <title>Comparative genomics of the lactic acid bacteria.</title>
        <authorList>
            <person name="Makarova K.S."/>
            <person name="Slesarev A."/>
            <person name="Wolf Y.I."/>
            <person name="Sorokin A."/>
            <person name="Mirkin B."/>
            <person name="Koonin E.V."/>
            <person name="Pavlov A."/>
            <person name="Pavlova N."/>
            <person name="Karamychev V."/>
            <person name="Polouchine N."/>
            <person name="Shakhova V."/>
            <person name="Grigoriev I."/>
            <person name="Lou Y."/>
            <person name="Rohksar D."/>
            <person name="Lucas S."/>
            <person name="Huang K."/>
            <person name="Goodstein D.M."/>
            <person name="Hawkins T."/>
            <person name="Plengvidhya V."/>
            <person name="Welker D."/>
            <person name="Hughes J."/>
            <person name="Goh Y."/>
            <person name="Benson A."/>
            <person name="Baldwin K."/>
            <person name="Lee J.-H."/>
            <person name="Diaz-Muniz I."/>
            <person name="Dosti B."/>
            <person name="Smeianov V."/>
            <person name="Wechter W."/>
            <person name="Barabote R."/>
            <person name="Lorca G."/>
            <person name="Altermann E."/>
            <person name="Barrangou R."/>
            <person name="Ganesan B."/>
            <person name="Xie Y."/>
            <person name="Rawsthorne H."/>
            <person name="Tamir D."/>
            <person name="Parker C."/>
            <person name="Breidt F."/>
            <person name="Broadbent J.R."/>
            <person name="Hutkins R."/>
            <person name="O'Sullivan D."/>
            <person name="Steele J."/>
            <person name="Unlu G."/>
            <person name="Saier M.H. Jr."/>
            <person name="Klaenhammer T."/>
            <person name="Richardson P."/>
            <person name="Kozyavkin S."/>
            <person name="Weimer B.C."/>
            <person name="Mills D.A."/>
        </authorList>
    </citation>
    <scope>NUCLEOTIDE SEQUENCE [LARGE SCALE GENOMIC DNA]</scope>
    <source>
        <strain>ATCC 25745 / CCUG 21536 / LMG 10740 / 183-1w</strain>
    </source>
</reference>
<evidence type="ECO:0000255" key="1">
    <source>
        <dbReference type="HAMAP-Rule" id="MF_00139"/>
    </source>
</evidence>
<evidence type="ECO:0000255" key="2">
    <source>
        <dbReference type="PROSITE-ProRule" id="PRU01202"/>
    </source>
</evidence>
<gene>
    <name evidence="1" type="primary">purH</name>
    <name type="ordered locus">PEPE_1458</name>
</gene>
<accession>Q03E83</accession>
<organism>
    <name type="scientific">Pediococcus pentosaceus (strain ATCC 25745 / CCUG 21536 / LMG 10740 / 183-1w)</name>
    <dbReference type="NCBI Taxonomy" id="278197"/>
    <lineage>
        <taxon>Bacteria</taxon>
        <taxon>Bacillati</taxon>
        <taxon>Bacillota</taxon>
        <taxon>Bacilli</taxon>
        <taxon>Lactobacillales</taxon>
        <taxon>Lactobacillaceae</taxon>
        <taxon>Pediococcus</taxon>
    </lineage>
</organism>
<name>PUR9_PEDPA</name>